<evidence type="ECO:0000255" key="1">
    <source>
        <dbReference type="HAMAP-Rule" id="MF_00457"/>
    </source>
</evidence>
<dbReference type="EMBL" id="CP001615">
    <property type="protein sequence ID" value="ACQ69427.1"/>
    <property type="molecule type" value="Genomic_DNA"/>
</dbReference>
<dbReference type="RefSeq" id="WP_012726546.1">
    <property type="nucleotide sequence ID" value="NC_012673.1"/>
</dbReference>
<dbReference type="SMR" id="C4L3C9"/>
<dbReference type="STRING" id="360911.EAT1b_0495"/>
<dbReference type="KEGG" id="eat:EAT1b_0495"/>
<dbReference type="eggNOG" id="COG2220">
    <property type="taxonomic scope" value="Bacteria"/>
</dbReference>
<dbReference type="HOGENOM" id="CLU_070010_4_1_9"/>
<dbReference type="OrthoDB" id="9789133at2"/>
<dbReference type="Proteomes" id="UP000000716">
    <property type="component" value="Chromosome"/>
</dbReference>
<dbReference type="GO" id="GO:0016787">
    <property type="term" value="F:hydrolase activity"/>
    <property type="evidence" value="ECO:0007669"/>
    <property type="project" value="UniProtKB-UniRule"/>
</dbReference>
<dbReference type="Gene3D" id="3.60.15.10">
    <property type="entry name" value="Ribonuclease Z/Hydroxyacylglutathione hydrolase-like"/>
    <property type="match status" value="1"/>
</dbReference>
<dbReference type="HAMAP" id="MF_00457">
    <property type="entry name" value="UPF0173"/>
    <property type="match status" value="1"/>
</dbReference>
<dbReference type="InterPro" id="IPR001279">
    <property type="entry name" value="Metallo-B-lactamas"/>
</dbReference>
<dbReference type="InterPro" id="IPR036866">
    <property type="entry name" value="RibonucZ/Hydroxyglut_hydro"/>
</dbReference>
<dbReference type="InterPro" id="IPR022877">
    <property type="entry name" value="UPF0173"/>
</dbReference>
<dbReference type="InterPro" id="IPR050114">
    <property type="entry name" value="UPF0173_UPF0282_UlaG_hydrolase"/>
</dbReference>
<dbReference type="NCBIfam" id="NF001911">
    <property type="entry name" value="PRK00685.1"/>
    <property type="match status" value="1"/>
</dbReference>
<dbReference type="PANTHER" id="PTHR43546:SF3">
    <property type="entry name" value="UPF0173 METAL-DEPENDENT HYDROLASE MJ1163"/>
    <property type="match status" value="1"/>
</dbReference>
<dbReference type="PANTHER" id="PTHR43546">
    <property type="entry name" value="UPF0173 METAL-DEPENDENT HYDROLASE MJ1163-RELATED"/>
    <property type="match status" value="1"/>
</dbReference>
<dbReference type="Pfam" id="PF12706">
    <property type="entry name" value="Lactamase_B_2"/>
    <property type="match status" value="1"/>
</dbReference>
<dbReference type="SMART" id="SM00849">
    <property type="entry name" value="Lactamase_B"/>
    <property type="match status" value="1"/>
</dbReference>
<dbReference type="SUPFAM" id="SSF56281">
    <property type="entry name" value="Metallo-hydrolase/oxidoreductase"/>
    <property type="match status" value="1"/>
</dbReference>
<reference key="1">
    <citation type="journal article" date="2011" name="J. Bacteriol.">
        <title>Complete genome sequence of the Thermophilic Bacterium Exiguobacterium sp. AT1b.</title>
        <authorList>
            <person name="Vishnivetskaya T.A."/>
            <person name="Lucas S."/>
            <person name="Copeland A."/>
            <person name="Lapidus A."/>
            <person name="Glavina del Rio T."/>
            <person name="Dalin E."/>
            <person name="Tice H."/>
            <person name="Bruce D.C."/>
            <person name="Goodwin L.A."/>
            <person name="Pitluck S."/>
            <person name="Saunders E."/>
            <person name="Brettin T."/>
            <person name="Detter C."/>
            <person name="Han C."/>
            <person name="Larimer F."/>
            <person name="Land M.L."/>
            <person name="Hauser L.J."/>
            <person name="Kyrpides N.C."/>
            <person name="Ovchinnikova G."/>
            <person name="Kathariou S."/>
            <person name="Ramaley R.F."/>
            <person name="Rodrigues D.F."/>
            <person name="Hendrix C."/>
            <person name="Richardson P."/>
            <person name="Tiedje J.M."/>
        </authorList>
    </citation>
    <scope>NUCLEOTIDE SEQUENCE [LARGE SCALE GENOMIC DNA]</scope>
    <source>
        <strain>ATCC BAA-1283 / AT1b</strain>
    </source>
</reference>
<gene>
    <name type="ordered locus">EAT1b_0495</name>
</gene>
<feature type="chain" id="PRO_1000206280" description="UPF0173 metal-dependent hydrolase EAT1b_0495">
    <location>
        <begin position="1"/>
        <end position="224"/>
    </location>
</feature>
<protein>
    <recommendedName>
        <fullName evidence="1">UPF0173 metal-dependent hydrolase EAT1b_0495</fullName>
    </recommendedName>
</protein>
<sequence length="224" mass="24844">MNITYYGHATVGFEIDGVNVLIDPFLTSNPHTDVDPSTLRPDYLLLTHAHFDHIEDVELIAKASGATIVATHELATYYEKKGFSVHGMNIGGGHAFPFGRVTMTQAFHSSSFDMGDTPVYMGMPAGFIIETNELTVYHAGDTSLFSDMKMYGERFEIDVAFLPIGDNFTMGPTDALDAAQWLQAKRVVPIHFDTFPPIKQDAQAFCDQLHRRGLLIEPNTTIEI</sequence>
<accession>C4L3C9</accession>
<name>Y495_EXISA</name>
<proteinExistence type="inferred from homology"/>
<keyword id="KW-0378">Hydrolase</keyword>
<organism>
    <name type="scientific">Exiguobacterium sp. (strain ATCC BAA-1283 / AT1b)</name>
    <dbReference type="NCBI Taxonomy" id="360911"/>
    <lineage>
        <taxon>Bacteria</taxon>
        <taxon>Bacillati</taxon>
        <taxon>Bacillota</taxon>
        <taxon>Bacilli</taxon>
        <taxon>Bacillales</taxon>
        <taxon>Bacillales Family XII. Incertae Sedis</taxon>
        <taxon>Exiguobacterium</taxon>
    </lineage>
</organism>
<comment type="similarity">
    <text evidence="1">Belongs to the UPF0173 family.</text>
</comment>